<protein>
    <recommendedName>
        <fullName evidence="4">Probable chloroethene reductive dehalogenase membrane anchor protein</fullName>
    </recommendedName>
</protein>
<dbReference type="EMBL" id="AY322364">
    <property type="protein sequence ID" value="AAQ94120.1"/>
    <property type="molecule type" value="Genomic_DNA"/>
</dbReference>
<dbReference type="EMBL" id="CP001827">
    <property type="protein sequence ID" value="ACZ62390.1"/>
    <property type="molecule type" value="Genomic_DNA"/>
</dbReference>
<dbReference type="RefSeq" id="WP_012882534.1">
    <property type="nucleotide sequence ID" value="NC_013552.1"/>
</dbReference>
<dbReference type="SMR" id="Q69GM3"/>
<dbReference type="KEGG" id="dev:DhcVS_1290"/>
<dbReference type="HOGENOM" id="CLU_176126_0_0_0"/>
<dbReference type="Proteomes" id="UP000002506">
    <property type="component" value="Chromosome"/>
</dbReference>
<dbReference type="GO" id="GO:0005886">
    <property type="term" value="C:plasma membrane"/>
    <property type="evidence" value="ECO:0007669"/>
    <property type="project" value="UniProtKB-SubCell"/>
</dbReference>
<accession>Q69GM3</accession>
<accession>D2BJ90</accession>
<feature type="chain" id="PRO_0000454142" description="Probable chloroethene reductive dehalogenase membrane anchor protein">
    <location>
        <begin position="1"/>
        <end position="93"/>
    </location>
</feature>
<feature type="transmembrane region" description="Helical" evidence="1">
    <location>
        <begin position="3"/>
        <end position="23"/>
    </location>
</feature>
<feature type="transmembrane region" description="Helical" evidence="1">
    <location>
        <begin position="35"/>
        <end position="55"/>
    </location>
</feature>
<feature type="transmembrane region" description="Helical" evidence="1">
    <location>
        <begin position="64"/>
        <end position="84"/>
    </location>
</feature>
<evidence type="ECO:0000255" key="1"/>
<evidence type="ECO:0000269" key="2">
    <source>
    </source>
</evidence>
<evidence type="ECO:0000303" key="3">
    <source>
    </source>
</evidence>
<evidence type="ECO:0000305" key="4"/>
<evidence type="ECO:0000305" key="5">
    <source>
    </source>
</evidence>
<evidence type="ECO:0000312" key="6">
    <source>
        <dbReference type="EMBL" id="ACZ62390.1"/>
    </source>
</evidence>
<sequence>MDAIYFFLTIALAVGLTMLFTWFKKNNITLKWNEWVLGILGLLLALFAIQHTYASATYEFEYTSAWIVGVIVLLLAVVPLLFAARSVRRRVDK</sequence>
<gene>
    <name evidence="3" type="primary">vcrB</name>
    <name evidence="6" type="ordered locus">DhcVS_1290</name>
</gene>
<comment type="function">
    <text evidence="5">May act as a membrane anchor for the chloroethene reductive dehalogenase VcrA.</text>
</comment>
<comment type="subcellular location">
    <subcellularLocation>
        <location evidence="4">Cell membrane</location>
        <topology evidence="1">Multi-pass membrane protein</topology>
    </subcellularLocation>
</comment>
<comment type="induction">
    <text evidence="2">Cotranscribed with vcrA and vcrC.</text>
</comment>
<comment type="similarity">
    <text evidence="4">Belongs to the PceB family.</text>
</comment>
<reference key="1">
    <citation type="journal article" date="2004" name="Appl. Environ. Microbiol.">
        <title>Molecular identification of the catabolic vinyl chloride reductase from Dehalococcoides sp. strain VS and its environmental distribution.</title>
        <authorList>
            <person name="Muller J.A."/>
            <person name="Rosner B.M."/>
            <person name="Von Abendroth G."/>
            <person name="Meshulam-Simon G."/>
            <person name="McCarty P.L."/>
            <person name="Spormann A.M."/>
        </authorList>
    </citation>
    <scope>NUCLEOTIDE SEQUENCE [GENOMIC DNA]</scope>
    <scope>FUNCTION</scope>
    <scope>INDUCTION</scope>
    <source>
        <strain>VS</strain>
    </source>
</reference>
<reference key="2">
    <citation type="journal article" date="2009" name="PLoS Genet.">
        <title>Localized plasticity in the streamlined genomes of vinyl chloride respiring Dehalococcoides.</title>
        <authorList>
            <person name="McMurdie P.J."/>
            <person name="Behrens S.F."/>
            <person name="Muller J.A."/>
            <person name="Goke J."/>
            <person name="Ritalahti K.M."/>
            <person name="Wagner R."/>
            <person name="Goltsman E."/>
            <person name="Lapidus A."/>
            <person name="Holmes S."/>
            <person name="Loffler F.E."/>
            <person name="Spormann A.M."/>
        </authorList>
    </citation>
    <scope>NUCLEOTIDE SEQUENCE [LARGE SCALE GENOMIC DNA]</scope>
    <source>
        <strain>VS</strain>
    </source>
</reference>
<keyword id="KW-1003">Cell membrane</keyword>
<keyword id="KW-0472">Membrane</keyword>
<keyword id="KW-1185">Reference proteome</keyword>
<keyword id="KW-0812">Transmembrane</keyword>
<keyword id="KW-1133">Transmembrane helix</keyword>
<organism>
    <name type="scientific">Dehalococcoides mccartyi (strain VS)</name>
    <dbReference type="NCBI Taxonomy" id="311424"/>
    <lineage>
        <taxon>Bacteria</taxon>
        <taxon>Bacillati</taxon>
        <taxon>Chloroflexota</taxon>
        <taxon>Dehalococcoidia</taxon>
        <taxon>Dehalococcoidales</taxon>
        <taxon>Dehalococcoidaceae</taxon>
        <taxon>Dehalococcoides</taxon>
    </lineage>
</organism>
<proteinExistence type="evidence at transcript level"/>
<name>VCRB_DEHMV</name>